<evidence type="ECO:0000255" key="1"/>
<evidence type="ECO:0000305" key="2"/>
<reference key="1">
    <citation type="journal article" date="2002" name="J. Bacteriol.">
        <title>Whole-genome comparison of Mycobacterium tuberculosis clinical and laboratory strains.</title>
        <authorList>
            <person name="Fleischmann R.D."/>
            <person name="Alland D."/>
            <person name="Eisen J.A."/>
            <person name="Carpenter L."/>
            <person name="White O."/>
            <person name="Peterson J.D."/>
            <person name="DeBoy R.T."/>
            <person name="Dodson R.J."/>
            <person name="Gwinn M.L."/>
            <person name="Haft D.H."/>
            <person name="Hickey E.K."/>
            <person name="Kolonay J.F."/>
            <person name="Nelson W.C."/>
            <person name="Umayam L.A."/>
            <person name="Ermolaeva M.D."/>
            <person name="Salzberg S.L."/>
            <person name="Delcher A."/>
            <person name="Utterback T.R."/>
            <person name="Weidman J.F."/>
            <person name="Khouri H.M."/>
            <person name="Gill J."/>
            <person name="Mikula A."/>
            <person name="Bishai W."/>
            <person name="Jacobs W.R. Jr."/>
            <person name="Venter J.C."/>
            <person name="Fraser C.M."/>
        </authorList>
    </citation>
    <scope>NUCLEOTIDE SEQUENCE [LARGE SCALE GENOMIC DNA]</scope>
    <source>
        <strain>CDC 1551 / Oshkosh</strain>
    </source>
</reference>
<protein>
    <recommendedName>
        <fullName>Uncharacterized protein MT0013</fullName>
    </recommendedName>
</protein>
<feature type="chain" id="PRO_0000427339" description="Uncharacterized protein MT0013">
    <location>
        <begin position="1"/>
        <end position="141"/>
    </location>
</feature>
<feature type="transmembrane region" description="Helical" evidence="1">
    <location>
        <begin position="12"/>
        <end position="32"/>
    </location>
</feature>
<feature type="transmembrane region" description="Helical" evidence="1">
    <location>
        <begin position="35"/>
        <end position="55"/>
    </location>
</feature>
<keyword id="KW-1003">Cell membrane</keyword>
<keyword id="KW-0472">Membrane</keyword>
<keyword id="KW-1185">Reference proteome</keyword>
<keyword id="KW-0812">Transmembrane</keyword>
<keyword id="KW-1133">Transmembrane helix</keyword>
<proteinExistence type="predicted"/>
<gene>
    <name type="ordered locus">MT0013</name>
</gene>
<dbReference type="EMBL" id="AE000516">
    <property type="protein sequence ID" value="AAK44235.1"/>
    <property type="molecule type" value="Genomic_DNA"/>
</dbReference>
<dbReference type="PIR" id="H70698">
    <property type="entry name" value="H70698"/>
</dbReference>
<dbReference type="RefSeq" id="WP_003899772.1">
    <property type="nucleotide sequence ID" value="NZ_KK341227.1"/>
</dbReference>
<dbReference type="KEGG" id="mtc:MT0013"/>
<dbReference type="PATRIC" id="fig|83331.31.peg.14"/>
<dbReference type="HOGENOM" id="CLU_135004_0_0_11"/>
<dbReference type="Proteomes" id="UP000001020">
    <property type="component" value="Chromosome"/>
</dbReference>
<dbReference type="GO" id="GO:0005886">
    <property type="term" value="C:plasma membrane"/>
    <property type="evidence" value="ECO:0007669"/>
    <property type="project" value="UniProtKB-SubCell"/>
</dbReference>
<dbReference type="InterPro" id="IPR019692">
    <property type="entry name" value="CFP-6_PH"/>
</dbReference>
<dbReference type="Pfam" id="PF10756">
    <property type="entry name" value="bPH_6"/>
    <property type="match status" value="1"/>
</dbReference>
<accession>P9WMA2</accession>
<accession>L0T589</accession>
<accession>P71580</accession>
<sequence>MQQTAWAPRTSGIAGCGAGGVVMAIASVTLVTDTPGRVLTGVAALGLILFASATWRARPRLAITPDGLAIRGWFRTQLLRHSNIKIIRIDEFRRYGRLVRLLEIETVSGGLLILSRWDLGTDPVEVLDALTAAGYAGRGQR</sequence>
<organism>
    <name type="scientific">Mycobacterium tuberculosis (strain CDC 1551 / Oshkosh)</name>
    <dbReference type="NCBI Taxonomy" id="83331"/>
    <lineage>
        <taxon>Bacteria</taxon>
        <taxon>Bacillati</taxon>
        <taxon>Actinomycetota</taxon>
        <taxon>Actinomycetes</taxon>
        <taxon>Mycobacteriales</taxon>
        <taxon>Mycobacteriaceae</taxon>
        <taxon>Mycobacterium</taxon>
        <taxon>Mycobacterium tuberculosis complex</taxon>
    </lineage>
</organism>
<name>Y010_MYCTO</name>
<comment type="subcellular location">
    <subcellularLocation>
        <location evidence="2">Cell membrane</location>
        <topology evidence="2">Multi-pass membrane protein</topology>
    </subcellularLocation>
</comment>